<proteinExistence type="inferred from homology"/>
<evidence type="ECO:0000255" key="1">
    <source>
        <dbReference type="HAMAP-Rule" id="MF_00182"/>
    </source>
</evidence>
<feature type="chain" id="PRO_1000020050" description="Methionyl-tRNA formyltransferase">
    <location>
        <begin position="1"/>
        <end position="311"/>
    </location>
</feature>
<feature type="binding site" evidence="1">
    <location>
        <begin position="109"/>
        <end position="112"/>
    </location>
    <ligand>
        <name>(6S)-5,6,7,8-tetrahydrofolate</name>
        <dbReference type="ChEBI" id="CHEBI:57453"/>
    </ligand>
</feature>
<name>FMT_ACET2</name>
<comment type="function">
    <text evidence="1">Attaches a formyl group to the free amino group of methionyl-tRNA(fMet). The formyl group appears to play a dual role in the initiator identity of N-formylmethionyl-tRNA by promoting its recognition by IF2 and preventing the misappropriation of this tRNA by the elongation apparatus.</text>
</comment>
<comment type="catalytic activity">
    <reaction evidence="1">
        <text>L-methionyl-tRNA(fMet) + (6R)-10-formyltetrahydrofolate = N-formyl-L-methionyl-tRNA(fMet) + (6S)-5,6,7,8-tetrahydrofolate + H(+)</text>
        <dbReference type="Rhea" id="RHEA:24380"/>
        <dbReference type="Rhea" id="RHEA-COMP:9952"/>
        <dbReference type="Rhea" id="RHEA-COMP:9953"/>
        <dbReference type="ChEBI" id="CHEBI:15378"/>
        <dbReference type="ChEBI" id="CHEBI:57453"/>
        <dbReference type="ChEBI" id="CHEBI:78530"/>
        <dbReference type="ChEBI" id="CHEBI:78844"/>
        <dbReference type="ChEBI" id="CHEBI:195366"/>
        <dbReference type="EC" id="2.1.2.9"/>
    </reaction>
</comment>
<comment type="similarity">
    <text evidence="1">Belongs to the Fmt family.</text>
</comment>
<dbReference type="EC" id="2.1.2.9" evidence="1"/>
<dbReference type="EMBL" id="CP000568">
    <property type="protein sequence ID" value="ABN51804.1"/>
    <property type="molecule type" value="Genomic_DNA"/>
</dbReference>
<dbReference type="SMR" id="A3DCX5"/>
<dbReference type="STRING" id="203119.Cthe_0568"/>
<dbReference type="KEGG" id="cth:Cthe_0568"/>
<dbReference type="eggNOG" id="COG0223">
    <property type="taxonomic scope" value="Bacteria"/>
</dbReference>
<dbReference type="HOGENOM" id="CLU_033347_1_1_9"/>
<dbReference type="Proteomes" id="UP000002145">
    <property type="component" value="Chromosome"/>
</dbReference>
<dbReference type="GO" id="GO:0005829">
    <property type="term" value="C:cytosol"/>
    <property type="evidence" value="ECO:0007669"/>
    <property type="project" value="TreeGrafter"/>
</dbReference>
<dbReference type="GO" id="GO:0004479">
    <property type="term" value="F:methionyl-tRNA formyltransferase activity"/>
    <property type="evidence" value="ECO:0007669"/>
    <property type="project" value="UniProtKB-UniRule"/>
</dbReference>
<dbReference type="CDD" id="cd08646">
    <property type="entry name" value="FMT_core_Met-tRNA-FMT_N"/>
    <property type="match status" value="1"/>
</dbReference>
<dbReference type="CDD" id="cd08704">
    <property type="entry name" value="Met_tRNA_FMT_C"/>
    <property type="match status" value="1"/>
</dbReference>
<dbReference type="FunFam" id="3.40.50.12230:FF:000001">
    <property type="entry name" value="Methionyl-tRNA formyltransferase"/>
    <property type="match status" value="1"/>
</dbReference>
<dbReference type="Gene3D" id="3.40.50.12230">
    <property type="match status" value="1"/>
</dbReference>
<dbReference type="HAMAP" id="MF_00182">
    <property type="entry name" value="Formyl_trans"/>
    <property type="match status" value="1"/>
</dbReference>
<dbReference type="InterPro" id="IPR005794">
    <property type="entry name" value="Fmt"/>
</dbReference>
<dbReference type="InterPro" id="IPR005793">
    <property type="entry name" value="Formyl_trans_C"/>
</dbReference>
<dbReference type="InterPro" id="IPR002376">
    <property type="entry name" value="Formyl_transf_N"/>
</dbReference>
<dbReference type="InterPro" id="IPR036477">
    <property type="entry name" value="Formyl_transf_N_sf"/>
</dbReference>
<dbReference type="InterPro" id="IPR011034">
    <property type="entry name" value="Formyl_transferase-like_C_sf"/>
</dbReference>
<dbReference type="InterPro" id="IPR001555">
    <property type="entry name" value="GART_AS"/>
</dbReference>
<dbReference type="InterPro" id="IPR044135">
    <property type="entry name" value="Met-tRNA-FMT_C"/>
</dbReference>
<dbReference type="InterPro" id="IPR041711">
    <property type="entry name" value="Met-tRNA-FMT_N"/>
</dbReference>
<dbReference type="NCBIfam" id="TIGR00460">
    <property type="entry name" value="fmt"/>
    <property type="match status" value="1"/>
</dbReference>
<dbReference type="PANTHER" id="PTHR11138">
    <property type="entry name" value="METHIONYL-TRNA FORMYLTRANSFERASE"/>
    <property type="match status" value="1"/>
</dbReference>
<dbReference type="PANTHER" id="PTHR11138:SF5">
    <property type="entry name" value="METHIONYL-TRNA FORMYLTRANSFERASE, MITOCHONDRIAL"/>
    <property type="match status" value="1"/>
</dbReference>
<dbReference type="Pfam" id="PF02911">
    <property type="entry name" value="Formyl_trans_C"/>
    <property type="match status" value="1"/>
</dbReference>
<dbReference type="Pfam" id="PF00551">
    <property type="entry name" value="Formyl_trans_N"/>
    <property type="match status" value="1"/>
</dbReference>
<dbReference type="SUPFAM" id="SSF50486">
    <property type="entry name" value="FMT C-terminal domain-like"/>
    <property type="match status" value="1"/>
</dbReference>
<dbReference type="SUPFAM" id="SSF53328">
    <property type="entry name" value="Formyltransferase"/>
    <property type="match status" value="1"/>
</dbReference>
<dbReference type="PROSITE" id="PS00373">
    <property type="entry name" value="GART"/>
    <property type="match status" value="1"/>
</dbReference>
<organism>
    <name type="scientific">Acetivibrio thermocellus (strain ATCC 27405 / DSM 1237 / JCM 9322 / NBRC 103400 / NCIMB 10682 / NRRL B-4536 / VPI 7372)</name>
    <name type="common">Clostridium thermocellum</name>
    <dbReference type="NCBI Taxonomy" id="203119"/>
    <lineage>
        <taxon>Bacteria</taxon>
        <taxon>Bacillati</taxon>
        <taxon>Bacillota</taxon>
        <taxon>Clostridia</taxon>
        <taxon>Eubacteriales</taxon>
        <taxon>Oscillospiraceae</taxon>
        <taxon>Acetivibrio</taxon>
    </lineage>
</organism>
<reference key="1">
    <citation type="submission" date="2007-02" db="EMBL/GenBank/DDBJ databases">
        <title>Complete sequence of Clostridium thermocellum ATCC 27405.</title>
        <authorList>
            <consortium name="US DOE Joint Genome Institute"/>
            <person name="Copeland A."/>
            <person name="Lucas S."/>
            <person name="Lapidus A."/>
            <person name="Barry K."/>
            <person name="Detter J.C."/>
            <person name="Glavina del Rio T."/>
            <person name="Hammon N."/>
            <person name="Israni S."/>
            <person name="Dalin E."/>
            <person name="Tice H."/>
            <person name="Pitluck S."/>
            <person name="Chertkov O."/>
            <person name="Brettin T."/>
            <person name="Bruce D."/>
            <person name="Han C."/>
            <person name="Tapia R."/>
            <person name="Gilna P."/>
            <person name="Schmutz J."/>
            <person name="Larimer F."/>
            <person name="Land M."/>
            <person name="Hauser L."/>
            <person name="Kyrpides N."/>
            <person name="Mikhailova N."/>
            <person name="Wu J.H.D."/>
            <person name="Newcomb M."/>
            <person name="Richardson P."/>
        </authorList>
    </citation>
    <scope>NUCLEOTIDE SEQUENCE [LARGE SCALE GENOMIC DNA]</scope>
    <source>
        <strain>ATCC 27405 / DSM 1237 / JCM 9322 / NBRC 103400 / NCIMB 10682 / NRRL B-4536 / VPI 7372</strain>
    </source>
</reference>
<keyword id="KW-0648">Protein biosynthesis</keyword>
<keyword id="KW-1185">Reference proteome</keyword>
<keyword id="KW-0808">Transferase</keyword>
<sequence>MRIVFMGTPEFAIPSLEMLVRERYEVAAVVTQPDKPKGRGKKTAMPPVKEFAIKNNIEVLQPSKVKTPEFVSTIRELRPDLLVTAAYGKILPQEVLDIPPYGCVNVHGSLLPKYRGAAPINWAIINGEKVTGITTMYTDAGMDTGDMLLKAEIEISDDMTAGELHDKLACLGAEVLRETLKKIEDSTLQRIPQPHEQATYAPMLDKTVGCINWSKSARDVHNLVRGTNPWPVAFTYYKGQKMKVWVTSVLDEENHNFTPGTILKVGKDGLVVACGVGKVVIKEVQFDSSRRMTVEEYICGHKVGEGEVLGQ</sequence>
<gene>
    <name evidence="1" type="primary">fmt</name>
    <name type="ordered locus">Cthe_0568</name>
</gene>
<accession>A3DCX5</accession>
<protein>
    <recommendedName>
        <fullName evidence="1">Methionyl-tRNA formyltransferase</fullName>
        <ecNumber evidence="1">2.1.2.9</ecNumber>
    </recommendedName>
</protein>